<reference key="1">
    <citation type="journal article" date="2000" name="Nature">
        <title>DNA sequence of both chromosomes of the cholera pathogen Vibrio cholerae.</title>
        <authorList>
            <person name="Heidelberg J.F."/>
            <person name="Eisen J.A."/>
            <person name="Nelson W.C."/>
            <person name="Clayton R.A."/>
            <person name="Gwinn M.L."/>
            <person name="Dodson R.J."/>
            <person name="Haft D.H."/>
            <person name="Hickey E.K."/>
            <person name="Peterson J.D."/>
            <person name="Umayam L.A."/>
            <person name="Gill S.R."/>
            <person name="Nelson K.E."/>
            <person name="Read T.D."/>
            <person name="Tettelin H."/>
            <person name="Richardson D.L."/>
            <person name="Ermolaeva M.D."/>
            <person name="Vamathevan J.J."/>
            <person name="Bass S."/>
            <person name="Qin H."/>
            <person name="Dragoi I."/>
            <person name="Sellers P."/>
            <person name="McDonald L.A."/>
            <person name="Utterback T.R."/>
            <person name="Fleischmann R.D."/>
            <person name="Nierman W.C."/>
            <person name="White O."/>
            <person name="Salzberg S.L."/>
            <person name="Smith H.O."/>
            <person name="Colwell R.R."/>
            <person name="Mekalanos J.J."/>
            <person name="Venter J.C."/>
            <person name="Fraser C.M."/>
        </authorList>
    </citation>
    <scope>NUCLEOTIDE SEQUENCE [LARGE SCALE GENOMIC DNA]</scope>
    <source>
        <strain>ATCC 39315 / El Tor Inaba N16961</strain>
    </source>
</reference>
<name>RPPH_VIBCH</name>
<comment type="function">
    <text evidence="1">Accelerates the degradation of transcripts by removing pyrophosphate from the 5'-end of triphosphorylated RNA, leading to a more labile monophosphorylated state that can stimulate subsequent ribonuclease cleavage.</text>
</comment>
<comment type="cofactor">
    <cofactor evidence="1">
        <name>a divalent metal cation</name>
        <dbReference type="ChEBI" id="CHEBI:60240"/>
    </cofactor>
</comment>
<comment type="similarity">
    <text evidence="1">Belongs to the Nudix hydrolase family. RppH subfamily.</text>
</comment>
<comment type="sequence caution" evidence="2">
    <conflict type="erroneous initiation">
        <sequence resource="EMBL-CDS" id="AAF93836"/>
    </conflict>
</comment>
<feature type="chain" id="PRO_0000057030" description="RNA pyrophosphohydrolase">
    <location>
        <begin position="1"/>
        <end position="172"/>
    </location>
</feature>
<feature type="domain" description="Nudix hydrolase" evidence="1">
    <location>
        <begin position="6"/>
        <end position="149"/>
    </location>
</feature>
<feature type="short sequence motif" description="Nudix box">
    <location>
        <begin position="38"/>
        <end position="59"/>
    </location>
</feature>
<gene>
    <name evidence="1" type="primary">rppH</name>
    <name evidence="1" type="synonym">nudH</name>
    <name type="ordered locus">VC_0671</name>
</gene>
<keyword id="KW-0378">Hydrolase</keyword>
<keyword id="KW-1185">Reference proteome</keyword>
<protein>
    <recommendedName>
        <fullName evidence="1">RNA pyrophosphohydrolase</fullName>
        <ecNumber evidence="1">3.6.1.-</ecNumber>
    </recommendedName>
    <alternativeName>
        <fullName evidence="1">(Di)nucleoside polyphosphate hydrolase</fullName>
    </alternativeName>
</protein>
<proteinExistence type="inferred from homology"/>
<evidence type="ECO:0000255" key="1">
    <source>
        <dbReference type="HAMAP-Rule" id="MF_00298"/>
    </source>
</evidence>
<evidence type="ECO:0000305" key="2"/>
<organism>
    <name type="scientific">Vibrio cholerae serotype O1 (strain ATCC 39315 / El Tor Inaba N16961)</name>
    <dbReference type="NCBI Taxonomy" id="243277"/>
    <lineage>
        <taxon>Bacteria</taxon>
        <taxon>Pseudomonadati</taxon>
        <taxon>Pseudomonadota</taxon>
        <taxon>Gammaproteobacteria</taxon>
        <taxon>Vibrionales</taxon>
        <taxon>Vibrionaceae</taxon>
        <taxon>Vibrio</taxon>
    </lineage>
</organism>
<dbReference type="EC" id="3.6.1.-" evidence="1"/>
<dbReference type="EMBL" id="AE003852">
    <property type="protein sequence ID" value="AAF93836.1"/>
    <property type="status" value="ALT_INIT"/>
    <property type="molecule type" value="Genomic_DNA"/>
</dbReference>
<dbReference type="PIR" id="G82294">
    <property type="entry name" value="G82294"/>
</dbReference>
<dbReference type="RefSeq" id="NP_230320.1">
    <property type="nucleotide sequence ID" value="NC_002505.1"/>
</dbReference>
<dbReference type="RefSeq" id="WP_001911254.1">
    <property type="nucleotide sequence ID" value="NZ_LT906614.1"/>
</dbReference>
<dbReference type="SMR" id="Q9KU53"/>
<dbReference type="STRING" id="243277.VC_0671"/>
<dbReference type="DNASU" id="2615460"/>
<dbReference type="EnsemblBacteria" id="AAF93836">
    <property type="protein sequence ID" value="AAF93836"/>
    <property type="gene ID" value="VC_0671"/>
</dbReference>
<dbReference type="GeneID" id="88783959"/>
<dbReference type="KEGG" id="vch:VC_0671"/>
<dbReference type="PATRIC" id="fig|243277.26.peg.643"/>
<dbReference type="eggNOG" id="COG0494">
    <property type="taxonomic scope" value="Bacteria"/>
</dbReference>
<dbReference type="HOGENOM" id="CLU_087195_3_2_6"/>
<dbReference type="Proteomes" id="UP000000584">
    <property type="component" value="Chromosome 1"/>
</dbReference>
<dbReference type="GO" id="GO:0005737">
    <property type="term" value="C:cytoplasm"/>
    <property type="evidence" value="ECO:0000318"/>
    <property type="project" value="GO_Central"/>
</dbReference>
<dbReference type="GO" id="GO:0034353">
    <property type="term" value="F:mRNA 5'-diphosphatase activity"/>
    <property type="evidence" value="ECO:0000318"/>
    <property type="project" value="GO_Central"/>
</dbReference>
<dbReference type="GO" id="GO:0006402">
    <property type="term" value="P:mRNA catabolic process"/>
    <property type="evidence" value="ECO:0000318"/>
    <property type="project" value="GO_Central"/>
</dbReference>
<dbReference type="CDD" id="cd03671">
    <property type="entry name" value="NUDIX_Ap4A_hydrolase_plant_like"/>
    <property type="match status" value="1"/>
</dbReference>
<dbReference type="FunFam" id="3.90.79.10:FF:000001">
    <property type="entry name" value="RNA pyrophosphohydrolase"/>
    <property type="match status" value="1"/>
</dbReference>
<dbReference type="Gene3D" id="3.90.79.10">
    <property type="entry name" value="Nucleoside Triphosphate Pyrophosphohydrolase"/>
    <property type="match status" value="1"/>
</dbReference>
<dbReference type="HAMAP" id="MF_00298">
    <property type="entry name" value="Nudix_RppH"/>
    <property type="match status" value="1"/>
</dbReference>
<dbReference type="InterPro" id="IPR020476">
    <property type="entry name" value="Nudix_hydrolase"/>
</dbReference>
<dbReference type="InterPro" id="IPR015797">
    <property type="entry name" value="NUDIX_hydrolase-like_dom_sf"/>
</dbReference>
<dbReference type="InterPro" id="IPR020084">
    <property type="entry name" value="NUDIX_hydrolase_CS"/>
</dbReference>
<dbReference type="InterPro" id="IPR000086">
    <property type="entry name" value="NUDIX_hydrolase_dom"/>
</dbReference>
<dbReference type="InterPro" id="IPR022927">
    <property type="entry name" value="RppH"/>
</dbReference>
<dbReference type="NCBIfam" id="NF001934">
    <property type="entry name" value="PRK00714.1-1"/>
    <property type="match status" value="1"/>
</dbReference>
<dbReference type="NCBIfam" id="NF001937">
    <property type="entry name" value="PRK00714.1-4"/>
    <property type="match status" value="1"/>
</dbReference>
<dbReference type="NCBIfam" id="NF001938">
    <property type="entry name" value="PRK00714.1-5"/>
    <property type="match status" value="1"/>
</dbReference>
<dbReference type="PANTHER" id="PTHR23114">
    <property type="entry name" value="M7GPPPN-MRNA HYDROLASE"/>
    <property type="match status" value="1"/>
</dbReference>
<dbReference type="PANTHER" id="PTHR23114:SF17">
    <property type="entry name" value="M7GPPPN-MRNA HYDROLASE"/>
    <property type="match status" value="1"/>
</dbReference>
<dbReference type="Pfam" id="PF00293">
    <property type="entry name" value="NUDIX"/>
    <property type="match status" value="1"/>
</dbReference>
<dbReference type="PRINTS" id="PR00502">
    <property type="entry name" value="NUDIXFAMILY"/>
</dbReference>
<dbReference type="SUPFAM" id="SSF55811">
    <property type="entry name" value="Nudix"/>
    <property type="match status" value="1"/>
</dbReference>
<dbReference type="PROSITE" id="PS51462">
    <property type="entry name" value="NUDIX"/>
    <property type="match status" value="1"/>
</dbReference>
<dbReference type="PROSITE" id="PS00893">
    <property type="entry name" value="NUDIX_BOX"/>
    <property type="match status" value="1"/>
</dbReference>
<accession>Q9KU53</accession>
<sequence>MIDGDGYRLNVGIVICNNHGQVFWAKRYGQHSWQFPQGGIDDGESPEQAMFRELYEEVGLTKKDVKVIATSRHWLRYKLPKRLVRWDSQPVCIGQKQKWFLLRLECDESKINMQRGSSPEFDGWRWVSYWYPVRQVVSFKRDVYRRAMKEFASLAMPFKERKVKGKRNTHRG</sequence>